<gene>
    <name evidence="1" type="primary">mdh</name>
    <name type="ordered locus">GTNG_2658</name>
</gene>
<comment type="function">
    <text evidence="1">Catalyzes the reversible oxidation of malate to oxaloacetate.</text>
</comment>
<comment type="catalytic activity">
    <reaction evidence="1">
        <text>(S)-malate + NAD(+) = oxaloacetate + NADH + H(+)</text>
        <dbReference type="Rhea" id="RHEA:21432"/>
        <dbReference type="ChEBI" id="CHEBI:15378"/>
        <dbReference type="ChEBI" id="CHEBI:15589"/>
        <dbReference type="ChEBI" id="CHEBI:16452"/>
        <dbReference type="ChEBI" id="CHEBI:57540"/>
        <dbReference type="ChEBI" id="CHEBI:57945"/>
        <dbReference type="EC" id="1.1.1.37"/>
    </reaction>
</comment>
<comment type="similarity">
    <text evidence="1">Belongs to the LDH/MDH superfamily. MDH type 3 family.</text>
</comment>
<evidence type="ECO:0000255" key="1">
    <source>
        <dbReference type="HAMAP-Rule" id="MF_00487"/>
    </source>
</evidence>
<protein>
    <recommendedName>
        <fullName evidence="1">Malate dehydrogenase</fullName>
        <ecNumber evidence="1">1.1.1.37</ecNumber>
    </recommendedName>
</protein>
<accession>A4IRP9</accession>
<organism>
    <name type="scientific">Geobacillus thermodenitrificans (strain NG80-2)</name>
    <dbReference type="NCBI Taxonomy" id="420246"/>
    <lineage>
        <taxon>Bacteria</taxon>
        <taxon>Bacillati</taxon>
        <taxon>Bacillota</taxon>
        <taxon>Bacilli</taxon>
        <taxon>Bacillales</taxon>
        <taxon>Anoxybacillaceae</taxon>
        <taxon>Geobacillus</taxon>
    </lineage>
</organism>
<keyword id="KW-0520">NAD</keyword>
<keyword id="KW-0560">Oxidoreductase</keyword>
<keyword id="KW-0597">Phosphoprotein</keyword>
<keyword id="KW-0816">Tricarboxylic acid cycle</keyword>
<proteinExistence type="inferred from homology"/>
<reference key="1">
    <citation type="journal article" date="2007" name="Proc. Natl. Acad. Sci. U.S.A.">
        <title>Genome and proteome of long-chain alkane degrading Geobacillus thermodenitrificans NG80-2 isolated from a deep-subsurface oil reservoir.</title>
        <authorList>
            <person name="Feng L."/>
            <person name="Wang W."/>
            <person name="Cheng J."/>
            <person name="Ren Y."/>
            <person name="Zhao G."/>
            <person name="Gao C."/>
            <person name="Tang Y."/>
            <person name="Liu X."/>
            <person name="Han W."/>
            <person name="Peng X."/>
            <person name="Liu R."/>
            <person name="Wang L."/>
        </authorList>
    </citation>
    <scope>NUCLEOTIDE SEQUENCE [LARGE SCALE GENOMIC DNA]</scope>
    <source>
        <strain>NG80-2</strain>
    </source>
</reference>
<feature type="chain" id="PRO_1000026475" description="Malate dehydrogenase">
    <location>
        <begin position="1"/>
        <end position="312"/>
    </location>
</feature>
<feature type="active site" description="Proton acceptor" evidence="1">
    <location>
        <position position="180"/>
    </location>
</feature>
<feature type="binding site" evidence="1">
    <location>
        <begin position="12"/>
        <end position="17"/>
    </location>
    <ligand>
        <name>NAD(+)</name>
        <dbReference type="ChEBI" id="CHEBI:57540"/>
    </ligand>
</feature>
<feature type="binding site" evidence="1">
    <location>
        <position position="36"/>
    </location>
    <ligand>
        <name>NAD(+)</name>
        <dbReference type="ChEBI" id="CHEBI:57540"/>
    </ligand>
</feature>
<feature type="binding site" evidence="1">
    <location>
        <position position="87"/>
    </location>
    <ligand>
        <name>substrate</name>
    </ligand>
</feature>
<feature type="binding site" evidence="1">
    <location>
        <position position="93"/>
    </location>
    <ligand>
        <name>substrate</name>
    </ligand>
</feature>
<feature type="binding site" evidence="1">
    <location>
        <position position="100"/>
    </location>
    <ligand>
        <name>NAD(+)</name>
        <dbReference type="ChEBI" id="CHEBI:57540"/>
    </ligand>
</feature>
<feature type="binding site" evidence="1">
    <location>
        <begin position="123"/>
        <end position="125"/>
    </location>
    <ligand>
        <name>NAD(+)</name>
        <dbReference type="ChEBI" id="CHEBI:57540"/>
    </ligand>
</feature>
<feature type="binding site" evidence="1">
    <location>
        <position position="125"/>
    </location>
    <ligand>
        <name>substrate</name>
    </ligand>
</feature>
<feature type="binding site" evidence="1">
    <location>
        <position position="156"/>
    </location>
    <ligand>
        <name>substrate</name>
    </ligand>
</feature>
<feature type="modified residue" description="Phosphoserine" evidence="1">
    <location>
        <position position="149"/>
    </location>
</feature>
<sequence>MAMKRKKISVIGAGFTGATTAFLLAQKELGDIVLVDIPQLENPTKGKALDMLESSPVLGFDANIVGTSDYADTADSDIVVITAGIARKPGMSRDDLVTTNQKIMKQVTKEVVKYSPNCYIIVLTNPVDAMTYTVFKESGFPKNRVIGQSGVLDTARFRTFVAQELNISVKDVTGFVLGGHGDDMVPLVRYSYAGGIPLEKLIPKDRLDAIVERTRKGGGEIVNLLGNGSAYYAPAASLAEMVEAIVKDQRRILPAIAYLEGEYGYEGIYLGVPTILGGNGIEKVIELELTEDEKAALAKSVESVKNVMRVLE</sequence>
<name>MDH_GEOTN</name>
<dbReference type="EC" id="1.1.1.37" evidence="1"/>
<dbReference type="EMBL" id="CP000557">
    <property type="protein sequence ID" value="ABO68003.1"/>
    <property type="molecule type" value="Genomic_DNA"/>
</dbReference>
<dbReference type="RefSeq" id="WP_008880855.1">
    <property type="nucleotide sequence ID" value="NC_009328.1"/>
</dbReference>
<dbReference type="SMR" id="A4IRP9"/>
<dbReference type="GeneID" id="87623198"/>
<dbReference type="KEGG" id="gtn:GTNG_2658"/>
<dbReference type="eggNOG" id="COG0039">
    <property type="taxonomic scope" value="Bacteria"/>
</dbReference>
<dbReference type="HOGENOM" id="CLU_045401_2_1_9"/>
<dbReference type="Proteomes" id="UP000001578">
    <property type="component" value="Chromosome"/>
</dbReference>
<dbReference type="GO" id="GO:0004459">
    <property type="term" value="F:L-lactate dehydrogenase activity"/>
    <property type="evidence" value="ECO:0007669"/>
    <property type="project" value="TreeGrafter"/>
</dbReference>
<dbReference type="GO" id="GO:0030060">
    <property type="term" value="F:L-malate dehydrogenase (NAD+) activity"/>
    <property type="evidence" value="ECO:0007669"/>
    <property type="project" value="UniProtKB-UniRule"/>
</dbReference>
<dbReference type="GO" id="GO:0006089">
    <property type="term" value="P:lactate metabolic process"/>
    <property type="evidence" value="ECO:0007669"/>
    <property type="project" value="TreeGrafter"/>
</dbReference>
<dbReference type="GO" id="GO:0006099">
    <property type="term" value="P:tricarboxylic acid cycle"/>
    <property type="evidence" value="ECO:0007669"/>
    <property type="project" value="UniProtKB-UniRule"/>
</dbReference>
<dbReference type="CDD" id="cd01339">
    <property type="entry name" value="LDH-like_MDH"/>
    <property type="match status" value="1"/>
</dbReference>
<dbReference type="FunFam" id="3.40.50.720:FF:000018">
    <property type="entry name" value="Malate dehydrogenase"/>
    <property type="match status" value="1"/>
</dbReference>
<dbReference type="FunFam" id="3.90.110.10:FF:000004">
    <property type="entry name" value="Malate dehydrogenase"/>
    <property type="match status" value="1"/>
</dbReference>
<dbReference type="Gene3D" id="3.90.110.10">
    <property type="entry name" value="Lactate dehydrogenase/glycoside hydrolase, family 4, C-terminal"/>
    <property type="match status" value="1"/>
</dbReference>
<dbReference type="Gene3D" id="3.40.50.720">
    <property type="entry name" value="NAD(P)-binding Rossmann-like Domain"/>
    <property type="match status" value="1"/>
</dbReference>
<dbReference type="HAMAP" id="MF_00487">
    <property type="entry name" value="Malate_dehydrog_3"/>
    <property type="match status" value="1"/>
</dbReference>
<dbReference type="InterPro" id="IPR001557">
    <property type="entry name" value="L-lactate/malate_DH"/>
</dbReference>
<dbReference type="InterPro" id="IPR022383">
    <property type="entry name" value="Lactate/malate_DH_C"/>
</dbReference>
<dbReference type="InterPro" id="IPR001236">
    <property type="entry name" value="Lactate/malate_DH_N"/>
</dbReference>
<dbReference type="InterPro" id="IPR015955">
    <property type="entry name" value="Lactate_DH/Glyco_Ohase_4_C"/>
</dbReference>
<dbReference type="InterPro" id="IPR011275">
    <property type="entry name" value="Malate_DH_type3"/>
</dbReference>
<dbReference type="InterPro" id="IPR036291">
    <property type="entry name" value="NAD(P)-bd_dom_sf"/>
</dbReference>
<dbReference type="NCBIfam" id="TIGR01763">
    <property type="entry name" value="MalateDH_bact"/>
    <property type="match status" value="1"/>
</dbReference>
<dbReference type="NCBIfam" id="NF004863">
    <property type="entry name" value="PRK06223.1"/>
    <property type="match status" value="1"/>
</dbReference>
<dbReference type="PANTHER" id="PTHR43128">
    <property type="entry name" value="L-2-HYDROXYCARBOXYLATE DEHYDROGENASE (NAD(P)(+))"/>
    <property type="match status" value="1"/>
</dbReference>
<dbReference type="PANTHER" id="PTHR43128:SF16">
    <property type="entry name" value="L-LACTATE DEHYDROGENASE"/>
    <property type="match status" value="1"/>
</dbReference>
<dbReference type="Pfam" id="PF02866">
    <property type="entry name" value="Ldh_1_C"/>
    <property type="match status" value="1"/>
</dbReference>
<dbReference type="Pfam" id="PF00056">
    <property type="entry name" value="Ldh_1_N"/>
    <property type="match status" value="1"/>
</dbReference>
<dbReference type="PIRSF" id="PIRSF000102">
    <property type="entry name" value="Lac_mal_DH"/>
    <property type="match status" value="1"/>
</dbReference>
<dbReference type="PRINTS" id="PR00086">
    <property type="entry name" value="LLDHDRGNASE"/>
</dbReference>
<dbReference type="SUPFAM" id="SSF56327">
    <property type="entry name" value="LDH C-terminal domain-like"/>
    <property type="match status" value="1"/>
</dbReference>
<dbReference type="SUPFAM" id="SSF51735">
    <property type="entry name" value="NAD(P)-binding Rossmann-fold domains"/>
    <property type="match status" value="1"/>
</dbReference>